<proteinExistence type="inferred from homology"/>
<evidence type="ECO:0000255" key="1">
    <source>
        <dbReference type="HAMAP-Rule" id="MF_00374"/>
    </source>
</evidence>
<evidence type="ECO:0000305" key="2"/>
<feature type="chain" id="PRO_0000130348" description="Large ribosomal subunit protein uL29">
    <location>
        <begin position="1"/>
        <end position="66"/>
    </location>
</feature>
<accession>Q73F88</accession>
<protein>
    <recommendedName>
        <fullName evidence="1">Large ribosomal subunit protein uL29</fullName>
    </recommendedName>
    <alternativeName>
        <fullName evidence="2">50S ribosomal protein L29</fullName>
    </alternativeName>
</protein>
<keyword id="KW-0687">Ribonucleoprotein</keyword>
<keyword id="KW-0689">Ribosomal protein</keyword>
<sequence length="66" mass="7768">MKTNDIRELTTAEIETKVKALKEELFNLRFQLATGQLENPTRIREVRKAIARMKTVVREREIGINR</sequence>
<name>RL29_BACC1</name>
<organism>
    <name type="scientific">Bacillus cereus (strain ATCC 10987 / NRS 248)</name>
    <dbReference type="NCBI Taxonomy" id="222523"/>
    <lineage>
        <taxon>Bacteria</taxon>
        <taxon>Bacillati</taxon>
        <taxon>Bacillota</taxon>
        <taxon>Bacilli</taxon>
        <taxon>Bacillales</taxon>
        <taxon>Bacillaceae</taxon>
        <taxon>Bacillus</taxon>
        <taxon>Bacillus cereus group</taxon>
    </lineage>
</organism>
<dbReference type="EMBL" id="AE017194">
    <property type="protein sequence ID" value="AAS39054.1"/>
    <property type="status" value="ALT_INIT"/>
    <property type="molecule type" value="Genomic_DNA"/>
</dbReference>
<dbReference type="SMR" id="Q73F88"/>
<dbReference type="KEGG" id="bca:BCE_0118"/>
<dbReference type="HOGENOM" id="CLU_158491_5_2_9"/>
<dbReference type="Proteomes" id="UP000002527">
    <property type="component" value="Chromosome"/>
</dbReference>
<dbReference type="GO" id="GO:0022625">
    <property type="term" value="C:cytosolic large ribosomal subunit"/>
    <property type="evidence" value="ECO:0007669"/>
    <property type="project" value="TreeGrafter"/>
</dbReference>
<dbReference type="GO" id="GO:0003735">
    <property type="term" value="F:structural constituent of ribosome"/>
    <property type="evidence" value="ECO:0007669"/>
    <property type="project" value="InterPro"/>
</dbReference>
<dbReference type="GO" id="GO:0006412">
    <property type="term" value="P:translation"/>
    <property type="evidence" value="ECO:0007669"/>
    <property type="project" value="UniProtKB-UniRule"/>
</dbReference>
<dbReference type="CDD" id="cd00427">
    <property type="entry name" value="Ribosomal_L29_HIP"/>
    <property type="match status" value="1"/>
</dbReference>
<dbReference type="FunFam" id="1.10.287.310:FF:000001">
    <property type="entry name" value="50S ribosomal protein L29"/>
    <property type="match status" value="1"/>
</dbReference>
<dbReference type="Gene3D" id="1.10.287.310">
    <property type="match status" value="1"/>
</dbReference>
<dbReference type="HAMAP" id="MF_00374">
    <property type="entry name" value="Ribosomal_uL29"/>
    <property type="match status" value="1"/>
</dbReference>
<dbReference type="InterPro" id="IPR050063">
    <property type="entry name" value="Ribosomal_protein_uL29"/>
</dbReference>
<dbReference type="InterPro" id="IPR001854">
    <property type="entry name" value="Ribosomal_uL29"/>
</dbReference>
<dbReference type="InterPro" id="IPR018254">
    <property type="entry name" value="Ribosomal_uL29_CS"/>
</dbReference>
<dbReference type="InterPro" id="IPR036049">
    <property type="entry name" value="Ribosomal_uL29_sf"/>
</dbReference>
<dbReference type="NCBIfam" id="TIGR00012">
    <property type="entry name" value="L29"/>
    <property type="match status" value="1"/>
</dbReference>
<dbReference type="PANTHER" id="PTHR10916">
    <property type="entry name" value="60S RIBOSOMAL PROTEIN L35/50S RIBOSOMAL PROTEIN L29"/>
    <property type="match status" value="1"/>
</dbReference>
<dbReference type="PANTHER" id="PTHR10916:SF0">
    <property type="entry name" value="LARGE RIBOSOMAL SUBUNIT PROTEIN UL29C"/>
    <property type="match status" value="1"/>
</dbReference>
<dbReference type="Pfam" id="PF00831">
    <property type="entry name" value="Ribosomal_L29"/>
    <property type="match status" value="1"/>
</dbReference>
<dbReference type="SUPFAM" id="SSF46561">
    <property type="entry name" value="Ribosomal protein L29 (L29p)"/>
    <property type="match status" value="1"/>
</dbReference>
<dbReference type="PROSITE" id="PS00579">
    <property type="entry name" value="RIBOSOMAL_L29"/>
    <property type="match status" value="1"/>
</dbReference>
<gene>
    <name evidence="1" type="primary">rpmC</name>
    <name type="ordered locus">BCE_0118</name>
</gene>
<comment type="similarity">
    <text evidence="1">Belongs to the universal ribosomal protein uL29 family.</text>
</comment>
<comment type="sequence caution" evidence="2">
    <conflict type="erroneous initiation">
        <sequence resource="EMBL-CDS" id="AAS39054"/>
    </conflict>
</comment>
<reference key="1">
    <citation type="journal article" date="2004" name="Nucleic Acids Res.">
        <title>The genome sequence of Bacillus cereus ATCC 10987 reveals metabolic adaptations and a large plasmid related to Bacillus anthracis pXO1.</title>
        <authorList>
            <person name="Rasko D.A."/>
            <person name="Ravel J."/>
            <person name="Oekstad O.A."/>
            <person name="Helgason E."/>
            <person name="Cer R.Z."/>
            <person name="Jiang L."/>
            <person name="Shores K.A."/>
            <person name="Fouts D.E."/>
            <person name="Tourasse N.J."/>
            <person name="Angiuoli S.V."/>
            <person name="Kolonay J.F."/>
            <person name="Nelson W.C."/>
            <person name="Kolstoe A.-B."/>
            <person name="Fraser C.M."/>
            <person name="Read T.D."/>
        </authorList>
    </citation>
    <scope>NUCLEOTIDE SEQUENCE [LARGE SCALE GENOMIC DNA]</scope>
    <source>
        <strain>ATCC 10987 / NRS 248</strain>
    </source>
</reference>